<proteinExistence type="evidence at transcript level"/>
<keyword id="KW-1064">Adaptive immunity</keyword>
<keyword id="KW-1015">Disulfide bond</keyword>
<keyword id="KW-0325">Glycoprotein</keyword>
<keyword id="KW-0391">Immunity</keyword>
<keyword id="KW-0472">Membrane</keyword>
<keyword id="KW-0491">MHC II</keyword>
<keyword id="KW-1185">Reference proteome</keyword>
<keyword id="KW-0732">Signal</keyword>
<keyword id="KW-0812">Transmembrane</keyword>
<keyword id="KW-1133">Transmembrane helix</keyword>
<organism>
    <name type="scientific">Sus scrofa</name>
    <name type="common">Pig</name>
    <dbReference type="NCBI Taxonomy" id="9823"/>
    <lineage>
        <taxon>Eukaryota</taxon>
        <taxon>Metazoa</taxon>
        <taxon>Chordata</taxon>
        <taxon>Craniata</taxon>
        <taxon>Vertebrata</taxon>
        <taxon>Euteleostomi</taxon>
        <taxon>Mammalia</taxon>
        <taxon>Eutheria</taxon>
        <taxon>Laurasiatheria</taxon>
        <taxon>Artiodactyla</taxon>
        <taxon>Suina</taxon>
        <taxon>Suidae</taxon>
        <taxon>Sus</taxon>
    </lineage>
</organism>
<evidence type="ECO:0000255" key="1"/>
<evidence type="ECO:0000255" key="2">
    <source>
        <dbReference type="PROSITE-ProRule" id="PRU00114"/>
    </source>
</evidence>
<evidence type="ECO:0000305" key="3"/>
<reference key="1">
    <citation type="journal article" date="1990" name="Immunogenetics">
        <title>Class II genes of miniature swine. III. Characterization of an expressed pig class II gene homologous to HLA-DQA.</title>
        <authorList>
            <person name="Hirsch F."/>
            <person name="Sachs D.H."/>
            <person name="Gustafsson K."/>
            <person name="Pratt K."/>
            <person name="Germana S."/>
            <person name="Leguern C."/>
        </authorList>
    </citation>
    <scope>NUCLEOTIDE SEQUENCE [MRNA]</scope>
</reference>
<sequence>MVPGRVLMWGALALTTVMSACGGEDIAADHVASYGLNVYQSYGPRGYFTHEFDGDEQFYVDLEKKETVWRLPLFSEFTSFDPQGALRNIATLKHNLNIVTKRSNNTAAVNKVPEVTVFSKSPVILGQPNTLICHVDSIFPPVINITWLKNGHSVKGFSETSFLSKNDHSFLKISYLTFLPSDDDFYDCKVEHWGLDKPLLKHWEPEIPAPMSELTETVVCALGLIVGLVGIVVGTVFIIQGLRSGGPSRHQGSL</sequence>
<feature type="signal peptide">
    <location>
        <begin position="1"/>
        <end position="23"/>
    </location>
</feature>
<feature type="chain" id="PRO_0000018981" description="SLA class II histocompatibility antigen, DQ haplotype C alpha chain">
    <location>
        <begin position="24"/>
        <end position="254"/>
    </location>
</feature>
<feature type="topological domain" description="Extracellular" evidence="1">
    <location>
        <begin position="24"/>
        <end position="216"/>
    </location>
</feature>
<feature type="transmembrane region" description="Helical" evidence="1">
    <location>
        <begin position="217"/>
        <end position="239"/>
    </location>
</feature>
<feature type="topological domain" description="Cytoplasmic">
    <location>
        <begin position="240"/>
        <end position="254"/>
    </location>
</feature>
<feature type="domain" description="Ig-like C1-type">
    <location>
        <begin position="113"/>
        <end position="204"/>
    </location>
</feature>
<feature type="region of interest" description="Alpha-1">
    <location>
        <begin position="24"/>
        <end position="120"/>
    </location>
</feature>
<feature type="region of interest" description="Alpha-2">
    <location>
        <begin position="121"/>
        <end position="203"/>
    </location>
</feature>
<feature type="region of interest" description="Connecting peptide">
    <location>
        <begin position="204"/>
        <end position="216"/>
    </location>
</feature>
<feature type="glycosylation site" description="N-linked (GlcNAc...) asparagine" evidence="1">
    <location>
        <position position="104"/>
    </location>
</feature>
<feature type="glycosylation site" description="N-linked (GlcNAc...) asparagine" evidence="1">
    <location>
        <position position="144"/>
    </location>
</feature>
<feature type="disulfide bond" evidence="2">
    <location>
        <begin position="133"/>
        <end position="188"/>
    </location>
</feature>
<dbReference type="EMBL" id="M29938">
    <property type="protein sequence ID" value="AAA31082.1"/>
    <property type="molecule type" value="mRNA"/>
</dbReference>
<dbReference type="PIR" id="I46605">
    <property type="entry name" value="I46605"/>
</dbReference>
<dbReference type="SMR" id="P15980"/>
<dbReference type="FunCoup" id="P15980">
    <property type="interactions" value="45"/>
</dbReference>
<dbReference type="GlyGen" id="P15980">
    <property type="glycosylation" value="2 sites"/>
</dbReference>
<dbReference type="PeptideAtlas" id="P15980"/>
<dbReference type="InParanoid" id="P15980"/>
<dbReference type="Proteomes" id="UP000008227">
    <property type="component" value="Unplaced"/>
</dbReference>
<dbReference type="Proteomes" id="UP000314985">
    <property type="component" value="Unplaced"/>
</dbReference>
<dbReference type="Proteomes" id="UP000694570">
    <property type="component" value="Unplaced"/>
</dbReference>
<dbReference type="Proteomes" id="UP000694571">
    <property type="component" value="Unplaced"/>
</dbReference>
<dbReference type="Proteomes" id="UP000694720">
    <property type="component" value="Unplaced"/>
</dbReference>
<dbReference type="Proteomes" id="UP000694722">
    <property type="component" value="Unplaced"/>
</dbReference>
<dbReference type="Proteomes" id="UP000694723">
    <property type="component" value="Unplaced"/>
</dbReference>
<dbReference type="Proteomes" id="UP000694724">
    <property type="component" value="Unplaced"/>
</dbReference>
<dbReference type="Proteomes" id="UP000694725">
    <property type="component" value="Unplaced"/>
</dbReference>
<dbReference type="Proteomes" id="UP000694726">
    <property type="component" value="Unplaced"/>
</dbReference>
<dbReference type="Proteomes" id="UP000694727">
    <property type="component" value="Unplaced"/>
</dbReference>
<dbReference type="Proteomes" id="UP000694728">
    <property type="component" value="Unplaced"/>
</dbReference>
<dbReference type="GO" id="GO:0031902">
    <property type="term" value="C:late endosome membrane"/>
    <property type="evidence" value="ECO:0000318"/>
    <property type="project" value="GO_Central"/>
</dbReference>
<dbReference type="GO" id="GO:0005765">
    <property type="term" value="C:lysosomal membrane"/>
    <property type="evidence" value="ECO:0000318"/>
    <property type="project" value="GO_Central"/>
</dbReference>
<dbReference type="GO" id="GO:0042613">
    <property type="term" value="C:MHC class II protein complex"/>
    <property type="evidence" value="ECO:0000318"/>
    <property type="project" value="GO_Central"/>
</dbReference>
<dbReference type="GO" id="GO:0023026">
    <property type="term" value="F:MHC class II protein complex binding"/>
    <property type="evidence" value="ECO:0000318"/>
    <property type="project" value="GO_Central"/>
</dbReference>
<dbReference type="GO" id="GO:0042605">
    <property type="term" value="F:peptide antigen binding"/>
    <property type="evidence" value="ECO:0000318"/>
    <property type="project" value="GO_Central"/>
</dbReference>
<dbReference type="GO" id="GO:0002250">
    <property type="term" value="P:adaptive immune response"/>
    <property type="evidence" value="ECO:0007669"/>
    <property type="project" value="UniProtKB-KW"/>
</dbReference>
<dbReference type="GO" id="GO:0019886">
    <property type="term" value="P:antigen processing and presentation of exogenous peptide antigen via MHC class II"/>
    <property type="evidence" value="ECO:0000318"/>
    <property type="project" value="GO_Central"/>
</dbReference>
<dbReference type="GO" id="GO:0002503">
    <property type="term" value="P:peptide antigen assembly with MHC class II protein complex"/>
    <property type="evidence" value="ECO:0000318"/>
    <property type="project" value="GO_Central"/>
</dbReference>
<dbReference type="GO" id="GO:0050778">
    <property type="term" value="P:positive regulation of immune response"/>
    <property type="evidence" value="ECO:0000318"/>
    <property type="project" value="GO_Central"/>
</dbReference>
<dbReference type="GO" id="GO:0050870">
    <property type="term" value="P:positive regulation of T cell activation"/>
    <property type="evidence" value="ECO:0000318"/>
    <property type="project" value="GO_Central"/>
</dbReference>
<dbReference type="CDD" id="cd21008">
    <property type="entry name" value="IgC1_MHC_II_alpha_HLA-DQ"/>
    <property type="match status" value="1"/>
</dbReference>
<dbReference type="FunFam" id="3.10.320.10:FF:000002">
    <property type="entry name" value="HLA class II histocompatibility antigen, DR alpha chain"/>
    <property type="match status" value="1"/>
</dbReference>
<dbReference type="Gene3D" id="3.10.320.10">
    <property type="entry name" value="Class II Histocompatibility Antigen, M Beta Chain, Chain B, domain 1"/>
    <property type="match status" value="1"/>
</dbReference>
<dbReference type="Gene3D" id="2.60.40.10">
    <property type="entry name" value="Immunoglobulins"/>
    <property type="match status" value="1"/>
</dbReference>
<dbReference type="InterPro" id="IPR007110">
    <property type="entry name" value="Ig-like_dom"/>
</dbReference>
<dbReference type="InterPro" id="IPR036179">
    <property type="entry name" value="Ig-like_dom_sf"/>
</dbReference>
<dbReference type="InterPro" id="IPR013783">
    <property type="entry name" value="Ig-like_fold"/>
</dbReference>
<dbReference type="InterPro" id="IPR003006">
    <property type="entry name" value="Ig/MHC_CS"/>
</dbReference>
<dbReference type="InterPro" id="IPR003597">
    <property type="entry name" value="Ig_C1-set"/>
</dbReference>
<dbReference type="InterPro" id="IPR050160">
    <property type="entry name" value="MHC/Immunoglobulin"/>
</dbReference>
<dbReference type="InterPro" id="IPR011162">
    <property type="entry name" value="MHC_I/II-like_Ag-recog"/>
</dbReference>
<dbReference type="InterPro" id="IPR014745">
    <property type="entry name" value="MHC_II_a/b_N"/>
</dbReference>
<dbReference type="InterPro" id="IPR001003">
    <property type="entry name" value="MHC_II_a_N"/>
</dbReference>
<dbReference type="PANTHER" id="PTHR19944:SF59">
    <property type="entry name" value="HLA CLASS II HISTOCOMPATIBILITY ANTIGEN, DQ ALPHA 1 CHAIN"/>
    <property type="match status" value="1"/>
</dbReference>
<dbReference type="PANTHER" id="PTHR19944">
    <property type="entry name" value="MHC CLASS II-RELATED"/>
    <property type="match status" value="1"/>
</dbReference>
<dbReference type="Pfam" id="PF07654">
    <property type="entry name" value="C1-set"/>
    <property type="match status" value="1"/>
</dbReference>
<dbReference type="Pfam" id="PF00993">
    <property type="entry name" value="MHC_II_alpha"/>
    <property type="match status" value="1"/>
</dbReference>
<dbReference type="SMART" id="SM00407">
    <property type="entry name" value="IGc1"/>
    <property type="match status" value="1"/>
</dbReference>
<dbReference type="SMART" id="SM00920">
    <property type="entry name" value="MHC_II_alpha"/>
    <property type="match status" value="1"/>
</dbReference>
<dbReference type="SUPFAM" id="SSF48726">
    <property type="entry name" value="Immunoglobulin"/>
    <property type="match status" value="1"/>
</dbReference>
<dbReference type="SUPFAM" id="SSF54452">
    <property type="entry name" value="MHC antigen-recognition domain"/>
    <property type="match status" value="1"/>
</dbReference>
<dbReference type="PROSITE" id="PS50835">
    <property type="entry name" value="IG_LIKE"/>
    <property type="match status" value="1"/>
</dbReference>
<dbReference type="PROSITE" id="PS00290">
    <property type="entry name" value="IG_MHC"/>
    <property type="match status" value="1"/>
</dbReference>
<protein>
    <recommendedName>
        <fullName>SLA class II histocompatibility antigen, DQ haplotype C alpha chain</fullName>
    </recommendedName>
</protein>
<comment type="subcellular location">
    <subcellularLocation>
        <location evidence="3">Membrane</location>
        <topology evidence="3">Single-pass type I membrane protein</topology>
    </subcellularLocation>
</comment>
<comment type="similarity">
    <text evidence="3">Belongs to the MHC class II family.</text>
</comment>
<accession>P15980</accession>
<name>HA2C_PIG</name>